<accession>Q13TH1</accession>
<reference key="1">
    <citation type="journal article" date="2006" name="Proc. Natl. Acad. Sci. U.S.A.">
        <title>Burkholderia xenovorans LB400 harbors a multi-replicon, 9.73-Mbp genome shaped for versatility.</title>
        <authorList>
            <person name="Chain P.S.G."/>
            <person name="Denef V.J."/>
            <person name="Konstantinidis K.T."/>
            <person name="Vergez L.M."/>
            <person name="Agullo L."/>
            <person name="Reyes V.L."/>
            <person name="Hauser L."/>
            <person name="Cordova M."/>
            <person name="Gomez L."/>
            <person name="Gonzalez M."/>
            <person name="Land M."/>
            <person name="Lao V."/>
            <person name="Larimer F."/>
            <person name="LiPuma J.J."/>
            <person name="Mahenthiralingam E."/>
            <person name="Malfatti S.A."/>
            <person name="Marx C.J."/>
            <person name="Parnell J.J."/>
            <person name="Ramette A."/>
            <person name="Richardson P."/>
            <person name="Seeger M."/>
            <person name="Smith D."/>
            <person name="Spilker T."/>
            <person name="Sul W.J."/>
            <person name="Tsoi T.V."/>
            <person name="Ulrich L.E."/>
            <person name="Zhulin I.B."/>
            <person name="Tiedje J.M."/>
        </authorList>
    </citation>
    <scope>NUCLEOTIDE SEQUENCE [LARGE SCALE GENOMIC DNA]</scope>
    <source>
        <strain>LB400</strain>
    </source>
</reference>
<keyword id="KW-1185">Reference proteome</keyword>
<keyword id="KW-0687">Ribonucleoprotein</keyword>
<keyword id="KW-0689">Ribosomal protein</keyword>
<keyword id="KW-0694">RNA-binding</keyword>
<keyword id="KW-0699">rRNA-binding</keyword>
<proteinExistence type="inferred from homology"/>
<sequence>MELKLLNANGQEGAGVSASDVVFGRDYNEALIHQVVVAYQANARSGNRAQKDREQVKHTTKKPWRQKGTGRARAGMSSSPLWRGGGRIFPNSPEENFSHKVNKKMHRAGLCSIFSQLAREGRISVVDELTLEAPKTKLLAEKFKAMGLDSVLVITDTVDENLYLASRNLAHVAVVEPRYADPLSLIYFKKILITKAAVAQIEELLS</sequence>
<organism>
    <name type="scientific">Paraburkholderia xenovorans (strain LB400)</name>
    <dbReference type="NCBI Taxonomy" id="266265"/>
    <lineage>
        <taxon>Bacteria</taxon>
        <taxon>Pseudomonadati</taxon>
        <taxon>Pseudomonadota</taxon>
        <taxon>Betaproteobacteria</taxon>
        <taxon>Burkholderiales</taxon>
        <taxon>Burkholderiaceae</taxon>
        <taxon>Paraburkholderia</taxon>
    </lineage>
</organism>
<comment type="function">
    <text evidence="1">One of the primary rRNA binding proteins, this protein initially binds near the 5'-end of the 23S rRNA. It is important during the early stages of 50S assembly. It makes multiple contacts with different domains of the 23S rRNA in the assembled 50S subunit and ribosome.</text>
</comment>
<comment type="function">
    <text evidence="1">Forms part of the polypeptide exit tunnel.</text>
</comment>
<comment type="subunit">
    <text evidence="1">Part of the 50S ribosomal subunit.</text>
</comment>
<comment type="similarity">
    <text evidence="1">Belongs to the universal ribosomal protein uL4 family.</text>
</comment>
<evidence type="ECO:0000255" key="1">
    <source>
        <dbReference type="HAMAP-Rule" id="MF_01328"/>
    </source>
</evidence>
<evidence type="ECO:0000256" key="2">
    <source>
        <dbReference type="SAM" id="MobiDB-lite"/>
    </source>
</evidence>
<evidence type="ECO:0000305" key="3"/>
<protein>
    <recommendedName>
        <fullName evidence="1">Large ribosomal subunit protein uL4</fullName>
    </recommendedName>
    <alternativeName>
        <fullName evidence="3">50S ribosomal protein L4</fullName>
    </alternativeName>
</protein>
<gene>
    <name evidence="1" type="primary">rplD</name>
    <name type="ordered locus">Bxeno_A4080</name>
    <name type="ORF">Bxe_A0315</name>
</gene>
<feature type="chain" id="PRO_1000052373" description="Large ribosomal subunit protein uL4">
    <location>
        <begin position="1"/>
        <end position="206"/>
    </location>
</feature>
<feature type="region of interest" description="Disordered" evidence="2">
    <location>
        <begin position="44"/>
        <end position="78"/>
    </location>
</feature>
<feature type="compositionally biased region" description="Basic residues" evidence="2">
    <location>
        <begin position="58"/>
        <end position="70"/>
    </location>
</feature>
<dbReference type="EMBL" id="CP000270">
    <property type="protein sequence ID" value="ABE32618.1"/>
    <property type="molecule type" value="Genomic_DNA"/>
</dbReference>
<dbReference type="RefSeq" id="WP_007180136.1">
    <property type="nucleotide sequence ID" value="NZ_CP008760.1"/>
</dbReference>
<dbReference type="SMR" id="Q13TH1"/>
<dbReference type="STRING" id="266265.Bxe_A0315"/>
<dbReference type="GeneID" id="97310993"/>
<dbReference type="KEGG" id="bxb:DR64_2485"/>
<dbReference type="KEGG" id="bxe:Bxe_A0315"/>
<dbReference type="eggNOG" id="COG0088">
    <property type="taxonomic scope" value="Bacteria"/>
</dbReference>
<dbReference type="OrthoDB" id="9803201at2"/>
<dbReference type="Proteomes" id="UP000001817">
    <property type="component" value="Chromosome 1"/>
</dbReference>
<dbReference type="GO" id="GO:1990904">
    <property type="term" value="C:ribonucleoprotein complex"/>
    <property type="evidence" value="ECO:0007669"/>
    <property type="project" value="UniProtKB-KW"/>
</dbReference>
<dbReference type="GO" id="GO:0005840">
    <property type="term" value="C:ribosome"/>
    <property type="evidence" value="ECO:0007669"/>
    <property type="project" value="UniProtKB-KW"/>
</dbReference>
<dbReference type="GO" id="GO:0019843">
    <property type="term" value="F:rRNA binding"/>
    <property type="evidence" value="ECO:0007669"/>
    <property type="project" value="UniProtKB-UniRule"/>
</dbReference>
<dbReference type="GO" id="GO:0003735">
    <property type="term" value="F:structural constituent of ribosome"/>
    <property type="evidence" value="ECO:0007669"/>
    <property type="project" value="InterPro"/>
</dbReference>
<dbReference type="GO" id="GO:0006412">
    <property type="term" value="P:translation"/>
    <property type="evidence" value="ECO:0007669"/>
    <property type="project" value="UniProtKB-UniRule"/>
</dbReference>
<dbReference type="Gene3D" id="3.40.1370.10">
    <property type="match status" value="1"/>
</dbReference>
<dbReference type="HAMAP" id="MF_01328_B">
    <property type="entry name" value="Ribosomal_uL4_B"/>
    <property type="match status" value="1"/>
</dbReference>
<dbReference type="InterPro" id="IPR002136">
    <property type="entry name" value="Ribosomal_uL4"/>
</dbReference>
<dbReference type="InterPro" id="IPR013005">
    <property type="entry name" value="Ribosomal_uL4-like"/>
</dbReference>
<dbReference type="InterPro" id="IPR023574">
    <property type="entry name" value="Ribosomal_uL4_dom_sf"/>
</dbReference>
<dbReference type="NCBIfam" id="TIGR03953">
    <property type="entry name" value="rplD_bact"/>
    <property type="match status" value="1"/>
</dbReference>
<dbReference type="PANTHER" id="PTHR10746">
    <property type="entry name" value="50S RIBOSOMAL PROTEIN L4"/>
    <property type="match status" value="1"/>
</dbReference>
<dbReference type="PANTHER" id="PTHR10746:SF6">
    <property type="entry name" value="LARGE RIBOSOMAL SUBUNIT PROTEIN UL4M"/>
    <property type="match status" value="1"/>
</dbReference>
<dbReference type="Pfam" id="PF00573">
    <property type="entry name" value="Ribosomal_L4"/>
    <property type="match status" value="1"/>
</dbReference>
<dbReference type="SUPFAM" id="SSF52166">
    <property type="entry name" value="Ribosomal protein L4"/>
    <property type="match status" value="1"/>
</dbReference>
<name>RL4_PARXL</name>